<protein>
    <recommendedName>
        <fullName evidence="1">Small ribosomal subunit protein uS2</fullName>
    </recommendedName>
    <alternativeName>
        <fullName evidence="3">40S ribosomal protein SA</fullName>
    </alternativeName>
</protein>
<feature type="initiator methionine" description="Removed" evidence="1">
    <location>
        <position position="1"/>
    </location>
</feature>
<feature type="chain" id="PRO_0000371577" description="Small ribosomal subunit protein uS2">
    <location>
        <begin position="2"/>
        <end position="306"/>
    </location>
</feature>
<feature type="region of interest" description="Disordered" evidence="2">
    <location>
        <begin position="209"/>
        <end position="229"/>
    </location>
</feature>
<feature type="region of interest" description="Disordered" evidence="2">
    <location>
        <begin position="250"/>
        <end position="306"/>
    </location>
</feature>
<feature type="compositionally biased region" description="Low complexity" evidence="2">
    <location>
        <begin position="257"/>
        <end position="268"/>
    </location>
</feature>
<feature type="compositionally biased region" description="Low complexity" evidence="2">
    <location>
        <begin position="280"/>
        <end position="300"/>
    </location>
</feature>
<feature type="sequence conflict" description="In Ref. 1; BAB78527." evidence="3" ref="1">
    <original>M</original>
    <variation>V</variation>
    <location>
        <position position="34"/>
    </location>
</feature>
<feature type="sequence conflict" description="In Ref. 1; BAB78527." evidence="3" ref="1">
    <original>E</original>
    <variation>D</variation>
    <location>
        <position position="200"/>
    </location>
</feature>
<feature type="sequence conflict" description="In Ref. 1; BAB78527." evidence="3" ref="1">
    <original>STTAAAPAAATAAPSWGGSAQDWSA</original>
    <variation>RRAWRWRIWWSQRWIWTLISIGTPAHEKHPK</variation>
    <location>
        <begin position="281"/>
        <end position="305"/>
    </location>
</feature>
<keyword id="KW-0963">Cytoplasm</keyword>
<keyword id="KW-1185">Reference proteome</keyword>
<keyword id="KW-0687">Ribonucleoprotein</keyword>
<keyword id="KW-0689">Ribosomal protein</keyword>
<name>RSSA_BOMMO</name>
<proteinExistence type="evidence at transcript level"/>
<sequence>MSGGLDVLALNEEDVTKMLAATTHLGAENVNFQMETYVYKRRADGTHVINLRRTWEKLVLAARAVVAIENPADVFVISSRPFGQRAVLKFAAHTGATPIAGRFTPGAFTNQIQAAFREPRLLIVLDPAQDHQPITEASYVNIPVIALCNTDSPLRFVDIAIPCNTKSSHSIGLMWWLLAREVLRLRGVLPRDQRWDVVVELFFYRDPEESEKDEQQAKEQAVVPAKPEVVAPVHEDWNETLEPVASWAEDTAPPAAPAAAPAFGAPPAQEEWSAQVQDEWSTTAAAPAAATAAPSWGGSAQDWSAA</sequence>
<accession>Q5UAP4</accession>
<accession>Q8WPH1</accession>
<evidence type="ECO:0000255" key="1">
    <source>
        <dbReference type="HAMAP-Rule" id="MF_03015"/>
    </source>
</evidence>
<evidence type="ECO:0000256" key="2">
    <source>
        <dbReference type="SAM" id="MobiDB-lite"/>
    </source>
</evidence>
<evidence type="ECO:0000305" key="3"/>
<dbReference type="EMBL" id="AB062685">
    <property type="protein sequence ID" value="BAB78527.1"/>
    <property type="molecule type" value="mRNA"/>
</dbReference>
<dbReference type="EMBL" id="AY769314">
    <property type="protein sequence ID" value="AAV34856.1"/>
    <property type="molecule type" value="mRNA"/>
</dbReference>
<dbReference type="RefSeq" id="NP_001106143.1">
    <property type="nucleotide sequence ID" value="NM_001112673.1"/>
</dbReference>
<dbReference type="SMR" id="Q5UAP4"/>
<dbReference type="FunCoup" id="Q5UAP4">
    <property type="interactions" value="1135"/>
</dbReference>
<dbReference type="STRING" id="7091.Q5UAP4"/>
<dbReference type="PaxDb" id="7091-BGIBMGA007311-TA"/>
<dbReference type="EnsemblMetazoa" id="NM_001112673.1">
    <property type="protein sequence ID" value="NP_001106143.1"/>
    <property type="gene ID" value="GeneID_692424"/>
</dbReference>
<dbReference type="GeneID" id="692424"/>
<dbReference type="KEGG" id="bmor:692424"/>
<dbReference type="CTD" id="104044"/>
<dbReference type="eggNOG" id="KOG0830">
    <property type="taxonomic scope" value="Eukaryota"/>
</dbReference>
<dbReference type="HOGENOM" id="CLU_058171_1_0_1"/>
<dbReference type="InParanoid" id="Q5UAP4"/>
<dbReference type="Proteomes" id="UP000005204">
    <property type="component" value="Unassembled WGS sequence"/>
</dbReference>
<dbReference type="GO" id="GO:0022627">
    <property type="term" value="C:cytosolic small ribosomal subunit"/>
    <property type="evidence" value="ECO:0007669"/>
    <property type="project" value="UniProtKB-UniRule"/>
</dbReference>
<dbReference type="GO" id="GO:0003735">
    <property type="term" value="F:structural constituent of ribosome"/>
    <property type="evidence" value="ECO:0007669"/>
    <property type="project" value="UniProtKB-UniRule"/>
</dbReference>
<dbReference type="GO" id="GO:0000028">
    <property type="term" value="P:ribosomal small subunit assembly"/>
    <property type="evidence" value="ECO:0007669"/>
    <property type="project" value="UniProtKB-UniRule"/>
</dbReference>
<dbReference type="GO" id="GO:0006412">
    <property type="term" value="P:translation"/>
    <property type="evidence" value="ECO:0007669"/>
    <property type="project" value="UniProtKB-UniRule"/>
</dbReference>
<dbReference type="CDD" id="cd01425">
    <property type="entry name" value="RPS2"/>
    <property type="match status" value="1"/>
</dbReference>
<dbReference type="FunFam" id="3.40.50.10490:FF:000012">
    <property type="entry name" value="40S ribosomal protein SA"/>
    <property type="match status" value="1"/>
</dbReference>
<dbReference type="Gene3D" id="3.40.50.10490">
    <property type="entry name" value="Glucose-6-phosphate isomerase like protein, domain 1"/>
    <property type="match status" value="1"/>
</dbReference>
<dbReference type="HAMAP" id="MF_03015">
    <property type="entry name" value="Ribosomal_S2_euk"/>
    <property type="match status" value="1"/>
</dbReference>
<dbReference type="InterPro" id="IPR001865">
    <property type="entry name" value="Ribosomal_uS2"/>
</dbReference>
<dbReference type="InterPro" id="IPR032281">
    <property type="entry name" value="Ribosomal_uS2_C"/>
</dbReference>
<dbReference type="InterPro" id="IPR018130">
    <property type="entry name" value="Ribosomal_uS2_CS"/>
</dbReference>
<dbReference type="InterPro" id="IPR027498">
    <property type="entry name" value="Ribosomal_uS2_euk"/>
</dbReference>
<dbReference type="InterPro" id="IPR005707">
    <property type="entry name" value="Ribosomal_uS2_euk/arc"/>
</dbReference>
<dbReference type="InterPro" id="IPR023591">
    <property type="entry name" value="Ribosomal_uS2_flav_dom_sf"/>
</dbReference>
<dbReference type="NCBIfam" id="TIGR01012">
    <property type="entry name" value="uS2_euk_arch"/>
    <property type="match status" value="1"/>
</dbReference>
<dbReference type="PANTHER" id="PTHR11489">
    <property type="entry name" value="40S RIBOSOMAL PROTEIN SA"/>
    <property type="match status" value="1"/>
</dbReference>
<dbReference type="Pfam" id="PF16122">
    <property type="entry name" value="40S_SA_C"/>
    <property type="match status" value="1"/>
</dbReference>
<dbReference type="Pfam" id="PF00318">
    <property type="entry name" value="Ribosomal_S2"/>
    <property type="match status" value="2"/>
</dbReference>
<dbReference type="PRINTS" id="PR00395">
    <property type="entry name" value="RIBOSOMALS2"/>
</dbReference>
<dbReference type="SUPFAM" id="SSF52313">
    <property type="entry name" value="Ribosomal protein S2"/>
    <property type="match status" value="1"/>
</dbReference>
<dbReference type="PROSITE" id="PS00962">
    <property type="entry name" value="RIBOSOMAL_S2_1"/>
    <property type="match status" value="1"/>
</dbReference>
<dbReference type="PROSITE" id="PS00963">
    <property type="entry name" value="RIBOSOMAL_S2_2"/>
    <property type="match status" value="1"/>
</dbReference>
<reference key="1">
    <citation type="journal article" date="2002" name="Insect Biochem. Mol. Biol.">
        <title>Identification and characterization of genes abnormally expressed in wing-deficient mutant (fluegellos) of the silkworm, Bombyx mori.</title>
        <authorList>
            <person name="Matsunaga T.M."/>
            <person name="Fujiwara H."/>
        </authorList>
    </citation>
    <scope>NUCLEOTIDE SEQUENCE [MRNA]</scope>
    <source>
        <strain>Fl</strain>
        <tissue>Wing imaginal disk</tissue>
    </source>
</reference>
<reference key="2">
    <citation type="submission" date="2004-09" db="EMBL/GenBank/DDBJ databases">
        <title>Ribosomal proteins of Bombyx mori.</title>
        <authorList>
            <person name="Heckel D.G."/>
            <person name="Morgan M."/>
            <person name="Shimada T."/>
            <person name="Mita K."/>
        </authorList>
    </citation>
    <scope>NUCLEOTIDE SEQUENCE [MRNA]</scope>
    <source>
        <strain>P50</strain>
    </source>
</reference>
<organism>
    <name type="scientific">Bombyx mori</name>
    <name type="common">Silk moth</name>
    <dbReference type="NCBI Taxonomy" id="7091"/>
    <lineage>
        <taxon>Eukaryota</taxon>
        <taxon>Metazoa</taxon>
        <taxon>Ecdysozoa</taxon>
        <taxon>Arthropoda</taxon>
        <taxon>Hexapoda</taxon>
        <taxon>Insecta</taxon>
        <taxon>Pterygota</taxon>
        <taxon>Neoptera</taxon>
        <taxon>Endopterygota</taxon>
        <taxon>Lepidoptera</taxon>
        <taxon>Glossata</taxon>
        <taxon>Ditrysia</taxon>
        <taxon>Bombycoidea</taxon>
        <taxon>Bombycidae</taxon>
        <taxon>Bombycinae</taxon>
        <taxon>Bombyx</taxon>
    </lineage>
</organism>
<comment type="function">
    <text evidence="1">Required for the assembly and/or stability of the 40S ribosomal subunit. Required for the processing of the 20S rRNA-precursor to mature 18S rRNA in a late step of the maturation of 40S ribosomal subunits.</text>
</comment>
<comment type="subunit">
    <text evidence="1">Component of the small ribosomal subunit. Mature ribosomes consist of a small (40S) and a large (60S) subunit. The 40S subunit contains about 33 different proteins and 1 molecule of RNA (18S). The 60S subunit contains about 49 different proteins and 3 molecules of RNA (28S, 5.8S and 5S). Interacts with ribosomal protein S21.</text>
</comment>
<comment type="subcellular location">
    <subcellularLocation>
        <location evidence="1">Cytoplasm</location>
    </subcellularLocation>
</comment>
<comment type="similarity">
    <text evidence="1">Belongs to the universal ribosomal protein uS2 family.</text>
</comment>